<name>FB190_ARATH</name>
<proteinExistence type="predicted"/>
<sequence length="397" mass="45995">MERQKKKDMDFLTEDLWEIILARLPLKSIITTPKLVCKVWKSIIESRCFRDLFQSLHQNSHHSSWSLMCRGCETEIMSHYGSDNWNLNHSLGYYISSFLTDKFENYNEARVVSYTDVGLILVHRVSSQSFYVANPVSRQCVEILPSQKLDCFWILGIATRVENGVVLGYKVVLLKPNFTFLIYSSETGLWSLNSDTFPFSYISQEFNNPISLNGSLYWLAHGSEYQDFIVSIDFYVVDSRSDRCRATPFPDLDKVPKFRRTCTTSQGCLMYMNIFSIPKVDGNLEDKLCVWRLESWQWRLVFEISLDSIKTGFDYIPLGTDPFDAKTVYLWSRKCLLSINLHNGDIVLHKDVEHSSAGRILNSVDCPRDMTYILESNFASFVLPQWMHPFPSTVRSV</sequence>
<dbReference type="EMBL" id="AP002051">
    <property type="protein sequence ID" value="BAB02625.1"/>
    <property type="molecule type" value="Genomic_DNA"/>
</dbReference>
<dbReference type="EMBL" id="CP002686">
    <property type="protein sequence ID" value="AEE77434.2"/>
    <property type="molecule type" value="Genomic_DNA"/>
</dbReference>
<dbReference type="RefSeq" id="NP_001319664.1">
    <property type="nucleotide sequence ID" value="NM_001338950.1"/>
</dbReference>
<dbReference type="SMR" id="Q9LHD3"/>
<dbReference type="STRING" id="3702.Q9LHD3"/>
<dbReference type="PaxDb" id="3702-AT3G28330.1"/>
<dbReference type="EnsemblPlants" id="AT3G28330.1">
    <property type="protein sequence ID" value="AT3G28330.1"/>
    <property type="gene ID" value="AT3G28330"/>
</dbReference>
<dbReference type="GeneID" id="822461"/>
<dbReference type="Gramene" id="AT3G28330.1">
    <property type="protein sequence ID" value="AT3G28330.1"/>
    <property type="gene ID" value="AT3G28330"/>
</dbReference>
<dbReference type="KEGG" id="ath:AT3G28330"/>
<dbReference type="Araport" id="AT3G28330"/>
<dbReference type="TAIR" id="AT3G28330"/>
<dbReference type="HOGENOM" id="CLU_029240_0_0_1"/>
<dbReference type="InParanoid" id="Q9LHD3"/>
<dbReference type="OMA" id="CETEIMS"/>
<dbReference type="PRO" id="PR:Q9LHD3"/>
<dbReference type="Proteomes" id="UP000006548">
    <property type="component" value="Chromosome 3"/>
</dbReference>
<dbReference type="ExpressionAtlas" id="Q9LHD3">
    <property type="expression patterns" value="baseline and differential"/>
</dbReference>
<dbReference type="InterPro" id="IPR056592">
    <property type="entry name" value="At3g26010-like_b-prop"/>
</dbReference>
<dbReference type="InterPro" id="IPR036047">
    <property type="entry name" value="F-box-like_dom_sf"/>
</dbReference>
<dbReference type="InterPro" id="IPR001810">
    <property type="entry name" value="F-box_dom"/>
</dbReference>
<dbReference type="InterPro" id="IPR050796">
    <property type="entry name" value="SCF_F-box_component"/>
</dbReference>
<dbReference type="PANTHER" id="PTHR31672">
    <property type="entry name" value="BNACNNG10540D PROTEIN"/>
    <property type="match status" value="1"/>
</dbReference>
<dbReference type="Pfam" id="PF24750">
    <property type="entry name" value="b-prop_At3g26010-like"/>
    <property type="match status" value="1"/>
</dbReference>
<dbReference type="Pfam" id="PF00646">
    <property type="entry name" value="F-box"/>
    <property type="match status" value="1"/>
</dbReference>
<dbReference type="SUPFAM" id="SSF81383">
    <property type="entry name" value="F-box domain"/>
    <property type="match status" value="1"/>
</dbReference>
<feature type="chain" id="PRO_0000283460" description="F-box protein At3g28330">
    <location>
        <begin position="1"/>
        <end position="397"/>
    </location>
</feature>
<feature type="domain" description="F-box">
    <location>
        <begin position="6"/>
        <end position="56"/>
    </location>
</feature>
<accession>Q9LHD3</accession>
<accession>F4IZ24</accession>
<keyword id="KW-1185">Reference proteome</keyword>
<organism>
    <name type="scientific">Arabidopsis thaliana</name>
    <name type="common">Mouse-ear cress</name>
    <dbReference type="NCBI Taxonomy" id="3702"/>
    <lineage>
        <taxon>Eukaryota</taxon>
        <taxon>Viridiplantae</taxon>
        <taxon>Streptophyta</taxon>
        <taxon>Embryophyta</taxon>
        <taxon>Tracheophyta</taxon>
        <taxon>Spermatophyta</taxon>
        <taxon>Magnoliopsida</taxon>
        <taxon>eudicotyledons</taxon>
        <taxon>Gunneridae</taxon>
        <taxon>Pentapetalae</taxon>
        <taxon>rosids</taxon>
        <taxon>malvids</taxon>
        <taxon>Brassicales</taxon>
        <taxon>Brassicaceae</taxon>
        <taxon>Camelineae</taxon>
        <taxon>Arabidopsis</taxon>
    </lineage>
</organism>
<reference key="1">
    <citation type="journal article" date="2000" name="DNA Res.">
        <title>Structural analysis of Arabidopsis thaliana chromosome 3. II. Sequence features of the 4,251,695 bp regions covered by 90 P1, TAC and BAC clones.</title>
        <authorList>
            <person name="Kaneko T."/>
            <person name="Katoh T."/>
            <person name="Sato S."/>
            <person name="Nakamura Y."/>
            <person name="Asamizu E."/>
            <person name="Tabata S."/>
        </authorList>
    </citation>
    <scope>NUCLEOTIDE SEQUENCE [LARGE SCALE GENOMIC DNA]</scope>
    <source>
        <strain>cv. Columbia</strain>
    </source>
</reference>
<reference key="2">
    <citation type="journal article" date="2017" name="Plant J.">
        <title>Araport11: a complete reannotation of the Arabidopsis thaliana reference genome.</title>
        <authorList>
            <person name="Cheng C.Y."/>
            <person name="Krishnakumar V."/>
            <person name="Chan A.P."/>
            <person name="Thibaud-Nissen F."/>
            <person name="Schobel S."/>
            <person name="Town C.D."/>
        </authorList>
    </citation>
    <scope>GENOME REANNOTATION</scope>
    <source>
        <strain>cv. Columbia</strain>
    </source>
</reference>
<gene>
    <name type="ordered locus">At3g28330</name>
    <name type="ORF">MZF16.14</name>
</gene>
<protein>
    <recommendedName>
        <fullName>F-box protein At3g28330</fullName>
    </recommendedName>
</protein>